<sequence>MVAKQRIRMANEKHSKNITQRGNVAKTLRPQEEKYPVGPWLLALFVFVVCGSAIFQIIQSIRMGM</sequence>
<proteinExistence type="inferred from homology"/>
<comment type="function">
    <text evidence="1">Interacts with target proteins during their translocation into the lumen of the endoplasmic reticulum. Protects unfolded target proteins against degradation during ER stress. May facilitate glycosylation of target proteins after termination of ER stress. May modulate the use of N-glycosylation sites on target proteins.</text>
</comment>
<comment type="subunit">
    <text evidence="1">Interacts with SEC61B, SEC61A1 and the SEC61 complex. Interacts with CANX.</text>
</comment>
<comment type="subcellular location">
    <subcellularLocation>
        <location evidence="1">Membrane</location>
        <topology evidence="1">Single-pass membrane protein</topology>
    </subcellularLocation>
    <subcellularLocation>
        <location evidence="1">Endoplasmic reticulum membrane</location>
        <topology evidence="1">Single-pass membrane protein</topology>
    </subcellularLocation>
</comment>
<comment type="alternative products">
    <event type="alternative splicing"/>
    <isoform>
        <id>Q6TAW2-1</id>
        <name>1</name>
        <sequence type="displayed"/>
    </isoform>
    <isoform>
        <id>Q6TAW2-2</id>
        <name>2</name>
        <sequence type="described" ref="VSP_022876 VSP_022877"/>
    </isoform>
</comment>
<comment type="similarity">
    <text evidence="4">Belongs to the RAMP4 family.</text>
</comment>
<gene>
    <name type="primary">Serp2</name>
</gene>
<dbReference type="EMBL" id="AY425619">
    <property type="protein sequence ID" value="AAR01199.1"/>
    <property type="molecule type" value="mRNA"/>
</dbReference>
<dbReference type="EMBL" id="BC100483">
    <property type="protein sequence ID" value="AAI00484.1"/>
    <property type="molecule type" value="mRNA"/>
</dbReference>
<dbReference type="EMBL" id="BC115492">
    <property type="protein sequence ID" value="AAI15493.1"/>
    <property type="molecule type" value="mRNA"/>
</dbReference>
<dbReference type="CCDS" id="CCDS49546.1">
    <molecule id="Q6TAW2-1"/>
</dbReference>
<dbReference type="RefSeq" id="NP_001153798.1">
    <molecule id="Q6TAW2-1"/>
    <property type="nucleotide sequence ID" value="NM_001160326.1"/>
</dbReference>
<dbReference type="SMR" id="Q6TAW2"/>
<dbReference type="BioGRID" id="215498">
    <property type="interactions" value="1"/>
</dbReference>
<dbReference type="FunCoup" id="Q6TAW2">
    <property type="interactions" value="389"/>
</dbReference>
<dbReference type="PhosphoSitePlus" id="Q6TAW2"/>
<dbReference type="PaxDb" id="10090-ENSMUSP00000068508"/>
<dbReference type="ProteomicsDB" id="256968">
    <molecule id="Q6TAW2-1"/>
</dbReference>
<dbReference type="ProteomicsDB" id="256969">
    <molecule id="Q6TAW2-2"/>
</dbReference>
<dbReference type="Antibodypedia" id="77372">
    <property type="antibodies" value="2 antibodies from 2 providers"/>
</dbReference>
<dbReference type="DNASU" id="72661"/>
<dbReference type="Ensembl" id="ENSMUST00000064517.9">
    <molecule id="Q6TAW2-1"/>
    <property type="protein sequence ID" value="ENSMUSP00000068508.8"/>
    <property type="gene ID" value="ENSMUSG00000052584.11"/>
</dbReference>
<dbReference type="Ensembl" id="ENSMUST00000227076.2">
    <molecule id="Q6TAW2-2"/>
    <property type="protein sequence ID" value="ENSMUSP00000154122.2"/>
    <property type="gene ID" value="ENSMUSG00000052584.11"/>
</dbReference>
<dbReference type="GeneID" id="72661"/>
<dbReference type="KEGG" id="mmu:72661"/>
<dbReference type="UCSC" id="uc011zor.1">
    <molecule id="Q6TAW2-1"/>
    <property type="organism name" value="mouse"/>
</dbReference>
<dbReference type="AGR" id="MGI:1919911"/>
<dbReference type="CTD" id="387923"/>
<dbReference type="MGI" id="MGI:1919911">
    <property type="gene designation" value="Serp2"/>
</dbReference>
<dbReference type="VEuPathDB" id="HostDB:ENSMUSG00000052584"/>
<dbReference type="eggNOG" id="KOG3491">
    <property type="taxonomic scope" value="Eukaryota"/>
</dbReference>
<dbReference type="GeneTree" id="ENSGT00940000162467"/>
<dbReference type="HOGENOM" id="CLU_160944_3_0_1"/>
<dbReference type="InParanoid" id="Q6TAW2"/>
<dbReference type="OMA" id="ATKFITQ"/>
<dbReference type="OrthoDB" id="16679at2759"/>
<dbReference type="PhylomeDB" id="Q6TAW2"/>
<dbReference type="TreeFam" id="TF313229"/>
<dbReference type="BioGRID-ORCS" id="72661">
    <property type="hits" value="0 hits in 78 CRISPR screens"/>
</dbReference>
<dbReference type="PRO" id="PR:Q6TAW2"/>
<dbReference type="Proteomes" id="UP000000589">
    <property type="component" value="Chromosome 14"/>
</dbReference>
<dbReference type="RNAct" id="Q6TAW2">
    <property type="molecule type" value="protein"/>
</dbReference>
<dbReference type="Bgee" id="ENSMUSG00000052584">
    <property type="expression patterns" value="Expressed in superior frontal gyrus and 95 other cell types or tissues"/>
</dbReference>
<dbReference type="ExpressionAtlas" id="Q6TAW2">
    <property type="expression patterns" value="baseline and differential"/>
</dbReference>
<dbReference type="GO" id="GO:0005789">
    <property type="term" value="C:endoplasmic reticulum membrane"/>
    <property type="evidence" value="ECO:0007669"/>
    <property type="project" value="UniProtKB-SubCell"/>
</dbReference>
<dbReference type="GO" id="GO:0006986">
    <property type="term" value="P:response to unfolded protein"/>
    <property type="evidence" value="ECO:0007669"/>
    <property type="project" value="UniProtKB-KW"/>
</dbReference>
<dbReference type="InterPro" id="IPR010580">
    <property type="entry name" value="ER_stress-assoc"/>
</dbReference>
<dbReference type="PANTHER" id="PTHR15601">
    <property type="entry name" value="STRESS ASSOCIATED ENDOPLASMIC RETICULUM PROTEIN SERP1/RAMP4"/>
    <property type="match status" value="1"/>
</dbReference>
<dbReference type="PANTHER" id="PTHR15601:SF20">
    <property type="entry name" value="STRESS-ASSOCIATED ENDOPLASMIC RETICULUM PROTEIN 2"/>
    <property type="match status" value="1"/>
</dbReference>
<dbReference type="Pfam" id="PF06624">
    <property type="entry name" value="RAMP4"/>
    <property type="match status" value="1"/>
</dbReference>
<accession>Q6TAW2</accession>
<accession>Q497L0</accession>
<protein>
    <recommendedName>
        <fullName>Stress-associated endoplasmic reticulum protein 2</fullName>
    </recommendedName>
    <alternativeName>
        <fullName>Ribosome-associated membrane protein RAMP4-2</fullName>
    </alternativeName>
</protein>
<reference key="1">
    <citation type="submission" date="2003-09" db="EMBL/GenBank/DDBJ databases">
        <title>Mouse RAMP4-2.</title>
        <authorList>
            <person name="Hartmann E."/>
        </authorList>
    </citation>
    <scope>NUCLEOTIDE SEQUENCE [MRNA] (ISOFORM 1)</scope>
</reference>
<reference key="2">
    <citation type="journal article" date="2004" name="Genome Res.">
        <title>The status, quality, and expansion of the NIH full-length cDNA project: the Mammalian Gene Collection (MGC).</title>
        <authorList>
            <consortium name="The MGC Project Team"/>
        </authorList>
    </citation>
    <scope>NUCLEOTIDE SEQUENCE [LARGE SCALE MRNA] (ISOFORM 2)</scope>
    <source>
        <tissue>Testis</tissue>
    </source>
</reference>
<keyword id="KW-0025">Alternative splicing</keyword>
<keyword id="KW-0256">Endoplasmic reticulum</keyword>
<keyword id="KW-0472">Membrane</keyword>
<keyword id="KW-1185">Reference proteome</keyword>
<keyword id="KW-0812">Transmembrane</keyword>
<keyword id="KW-1133">Transmembrane helix</keyword>
<keyword id="KW-0834">Unfolded protein response</keyword>
<name>SERP2_MOUSE</name>
<organism>
    <name type="scientific">Mus musculus</name>
    <name type="common">Mouse</name>
    <dbReference type="NCBI Taxonomy" id="10090"/>
    <lineage>
        <taxon>Eukaryota</taxon>
        <taxon>Metazoa</taxon>
        <taxon>Chordata</taxon>
        <taxon>Craniata</taxon>
        <taxon>Vertebrata</taxon>
        <taxon>Euteleostomi</taxon>
        <taxon>Mammalia</taxon>
        <taxon>Eutheria</taxon>
        <taxon>Euarchontoglires</taxon>
        <taxon>Glires</taxon>
        <taxon>Rodentia</taxon>
        <taxon>Myomorpha</taxon>
        <taxon>Muroidea</taxon>
        <taxon>Muridae</taxon>
        <taxon>Murinae</taxon>
        <taxon>Mus</taxon>
        <taxon>Mus</taxon>
    </lineage>
</organism>
<feature type="chain" id="PRO_0000274800" description="Stress-associated endoplasmic reticulum protein 2">
    <location>
        <begin position="1"/>
        <end position="65"/>
    </location>
</feature>
<feature type="transmembrane region" description="Helical" evidence="2">
    <location>
        <begin position="38"/>
        <end position="58"/>
    </location>
</feature>
<feature type="splice variant" id="VSP_022876" description="In isoform 2." evidence="3">
    <original>A</original>
    <variation>G</variation>
    <location>
        <position position="53"/>
    </location>
</feature>
<feature type="splice variant" id="VSP_022877" description="In isoform 2." evidence="3">
    <location>
        <begin position="54"/>
        <end position="65"/>
    </location>
</feature>
<feature type="sequence conflict" description="In Ref. 1; AAR01199." evidence="4" ref="1">
    <original>V</original>
    <variation>L</variation>
    <location>
        <position position="24"/>
    </location>
</feature>
<evidence type="ECO:0000250" key="1">
    <source>
        <dbReference type="UniProtKB" id="Q9R2C1"/>
    </source>
</evidence>
<evidence type="ECO:0000255" key="2"/>
<evidence type="ECO:0000303" key="3">
    <source>
    </source>
</evidence>
<evidence type="ECO:0000305" key="4"/>